<feature type="chain" id="PRO_0000320898" description="Protein translocase subunit SecA">
    <location>
        <begin position="1"/>
        <end position="912"/>
    </location>
</feature>
<feature type="binding site" evidence="1">
    <location>
        <position position="87"/>
    </location>
    <ligand>
        <name>ATP</name>
        <dbReference type="ChEBI" id="CHEBI:30616"/>
    </ligand>
</feature>
<feature type="binding site" evidence="1">
    <location>
        <begin position="105"/>
        <end position="109"/>
    </location>
    <ligand>
        <name>ATP</name>
        <dbReference type="ChEBI" id="CHEBI:30616"/>
    </ligand>
</feature>
<feature type="binding site" evidence="1">
    <location>
        <position position="512"/>
    </location>
    <ligand>
        <name>ATP</name>
        <dbReference type="ChEBI" id="CHEBI:30616"/>
    </ligand>
</feature>
<feature type="binding site" evidence="1">
    <location>
        <position position="896"/>
    </location>
    <ligand>
        <name>Zn(2+)</name>
        <dbReference type="ChEBI" id="CHEBI:29105"/>
    </ligand>
</feature>
<feature type="binding site" evidence="1">
    <location>
        <position position="898"/>
    </location>
    <ligand>
        <name>Zn(2+)</name>
        <dbReference type="ChEBI" id="CHEBI:29105"/>
    </ligand>
</feature>
<feature type="binding site" evidence="1">
    <location>
        <position position="907"/>
    </location>
    <ligand>
        <name>Zn(2+)</name>
        <dbReference type="ChEBI" id="CHEBI:29105"/>
    </ligand>
</feature>
<feature type="binding site" evidence="1">
    <location>
        <position position="908"/>
    </location>
    <ligand>
        <name>Zn(2+)</name>
        <dbReference type="ChEBI" id="CHEBI:29105"/>
    </ligand>
</feature>
<dbReference type="EC" id="7.4.2.8" evidence="1"/>
<dbReference type="EMBL" id="CP000094">
    <property type="protein sequence ID" value="ABA76165.1"/>
    <property type="status" value="ALT_INIT"/>
    <property type="molecule type" value="Genomic_DNA"/>
</dbReference>
<dbReference type="RefSeq" id="WP_041475415.1">
    <property type="nucleotide sequence ID" value="NC_007492.2"/>
</dbReference>
<dbReference type="SMR" id="Q3K7T9"/>
<dbReference type="KEGG" id="pfo:Pfl01_4428"/>
<dbReference type="eggNOG" id="COG0653">
    <property type="taxonomic scope" value="Bacteria"/>
</dbReference>
<dbReference type="HOGENOM" id="CLU_005314_3_0_6"/>
<dbReference type="Proteomes" id="UP000002704">
    <property type="component" value="Chromosome"/>
</dbReference>
<dbReference type="GO" id="GO:0031522">
    <property type="term" value="C:cell envelope Sec protein transport complex"/>
    <property type="evidence" value="ECO:0007669"/>
    <property type="project" value="TreeGrafter"/>
</dbReference>
<dbReference type="GO" id="GO:0005829">
    <property type="term" value="C:cytosol"/>
    <property type="evidence" value="ECO:0007669"/>
    <property type="project" value="TreeGrafter"/>
</dbReference>
<dbReference type="GO" id="GO:0005886">
    <property type="term" value="C:plasma membrane"/>
    <property type="evidence" value="ECO:0007669"/>
    <property type="project" value="UniProtKB-SubCell"/>
</dbReference>
<dbReference type="GO" id="GO:0005524">
    <property type="term" value="F:ATP binding"/>
    <property type="evidence" value="ECO:0007669"/>
    <property type="project" value="UniProtKB-UniRule"/>
</dbReference>
<dbReference type="GO" id="GO:0046872">
    <property type="term" value="F:metal ion binding"/>
    <property type="evidence" value="ECO:0007669"/>
    <property type="project" value="UniProtKB-KW"/>
</dbReference>
<dbReference type="GO" id="GO:0008564">
    <property type="term" value="F:protein-exporting ATPase activity"/>
    <property type="evidence" value="ECO:0007669"/>
    <property type="project" value="UniProtKB-EC"/>
</dbReference>
<dbReference type="GO" id="GO:0065002">
    <property type="term" value="P:intracellular protein transmembrane transport"/>
    <property type="evidence" value="ECO:0007669"/>
    <property type="project" value="UniProtKB-UniRule"/>
</dbReference>
<dbReference type="GO" id="GO:0017038">
    <property type="term" value="P:protein import"/>
    <property type="evidence" value="ECO:0007669"/>
    <property type="project" value="InterPro"/>
</dbReference>
<dbReference type="GO" id="GO:0006605">
    <property type="term" value="P:protein targeting"/>
    <property type="evidence" value="ECO:0007669"/>
    <property type="project" value="UniProtKB-UniRule"/>
</dbReference>
<dbReference type="GO" id="GO:0043952">
    <property type="term" value="P:protein transport by the Sec complex"/>
    <property type="evidence" value="ECO:0007669"/>
    <property type="project" value="TreeGrafter"/>
</dbReference>
<dbReference type="CDD" id="cd17928">
    <property type="entry name" value="DEXDc_SecA"/>
    <property type="match status" value="1"/>
</dbReference>
<dbReference type="CDD" id="cd18803">
    <property type="entry name" value="SF2_C_secA"/>
    <property type="match status" value="1"/>
</dbReference>
<dbReference type="FunFam" id="3.40.50.300:FF:000081">
    <property type="entry name" value="Preprotein translocase subunit SecA"/>
    <property type="match status" value="1"/>
</dbReference>
<dbReference type="FunFam" id="3.40.50.300:FF:000113">
    <property type="entry name" value="Preprotein translocase subunit SecA"/>
    <property type="match status" value="1"/>
</dbReference>
<dbReference type="FunFam" id="3.90.1440.10:FF:000001">
    <property type="entry name" value="Preprotein translocase subunit SecA"/>
    <property type="match status" value="1"/>
</dbReference>
<dbReference type="FunFam" id="1.10.3060.10:FF:000003">
    <property type="entry name" value="Protein translocase subunit SecA"/>
    <property type="match status" value="1"/>
</dbReference>
<dbReference type="Gene3D" id="1.10.3060.10">
    <property type="entry name" value="Helical scaffold and wing domains of SecA"/>
    <property type="match status" value="1"/>
</dbReference>
<dbReference type="Gene3D" id="3.40.50.300">
    <property type="entry name" value="P-loop containing nucleotide triphosphate hydrolases"/>
    <property type="match status" value="2"/>
</dbReference>
<dbReference type="Gene3D" id="3.90.1440.10">
    <property type="entry name" value="SecA, preprotein cross-linking domain"/>
    <property type="match status" value="1"/>
</dbReference>
<dbReference type="HAMAP" id="MF_01382">
    <property type="entry name" value="SecA"/>
    <property type="match status" value="1"/>
</dbReference>
<dbReference type="InterPro" id="IPR014001">
    <property type="entry name" value="Helicase_ATP-bd"/>
</dbReference>
<dbReference type="InterPro" id="IPR027417">
    <property type="entry name" value="P-loop_NTPase"/>
</dbReference>
<dbReference type="InterPro" id="IPR004027">
    <property type="entry name" value="SEC_C_motif"/>
</dbReference>
<dbReference type="InterPro" id="IPR000185">
    <property type="entry name" value="SecA"/>
</dbReference>
<dbReference type="InterPro" id="IPR011115">
    <property type="entry name" value="SecA_DEAD"/>
</dbReference>
<dbReference type="InterPro" id="IPR014018">
    <property type="entry name" value="SecA_motor_DEAD"/>
</dbReference>
<dbReference type="InterPro" id="IPR011130">
    <property type="entry name" value="SecA_preprotein_X-link_dom"/>
</dbReference>
<dbReference type="InterPro" id="IPR044722">
    <property type="entry name" value="SecA_SF2_C"/>
</dbReference>
<dbReference type="InterPro" id="IPR011116">
    <property type="entry name" value="SecA_Wing/Scaffold"/>
</dbReference>
<dbReference type="InterPro" id="IPR036266">
    <property type="entry name" value="SecA_Wing/Scaffold_sf"/>
</dbReference>
<dbReference type="InterPro" id="IPR036670">
    <property type="entry name" value="SecA_X-link_sf"/>
</dbReference>
<dbReference type="NCBIfam" id="NF009538">
    <property type="entry name" value="PRK12904.1"/>
    <property type="match status" value="1"/>
</dbReference>
<dbReference type="NCBIfam" id="TIGR00963">
    <property type="entry name" value="secA"/>
    <property type="match status" value="1"/>
</dbReference>
<dbReference type="PANTHER" id="PTHR30612:SF0">
    <property type="entry name" value="CHLOROPLAST PROTEIN-TRANSPORTING ATPASE"/>
    <property type="match status" value="1"/>
</dbReference>
<dbReference type="PANTHER" id="PTHR30612">
    <property type="entry name" value="SECA INNER MEMBRANE COMPONENT OF SEC PROTEIN SECRETION SYSTEM"/>
    <property type="match status" value="1"/>
</dbReference>
<dbReference type="Pfam" id="PF21090">
    <property type="entry name" value="P-loop_SecA"/>
    <property type="match status" value="1"/>
</dbReference>
<dbReference type="Pfam" id="PF02810">
    <property type="entry name" value="SEC-C"/>
    <property type="match status" value="1"/>
</dbReference>
<dbReference type="Pfam" id="PF07517">
    <property type="entry name" value="SecA_DEAD"/>
    <property type="match status" value="1"/>
</dbReference>
<dbReference type="Pfam" id="PF01043">
    <property type="entry name" value="SecA_PP_bind"/>
    <property type="match status" value="1"/>
</dbReference>
<dbReference type="Pfam" id="PF07516">
    <property type="entry name" value="SecA_SW"/>
    <property type="match status" value="1"/>
</dbReference>
<dbReference type="PRINTS" id="PR00906">
    <property type="entry name" value="SECA"/>
</dbReference>
<dbReference type="SMART" id="SM00957">
    <property type="entry name" value="SecA_DEAD"/>
    <property type="match status" value="1"/>
</dbReference>
<dbReference type="SMART" id="SM00958">
    <property type="entry name" value="SecA_PP_bind"/>
    <property type="match status" value="1"/>
</dbReference>
<dbReference type="SUPFAM" id="SSF81886">
    <property type="entry name" value="Helical scaffold and wing domains of SecA"/>
    <property type="match status" value="1"/>
</dbReference>
<dbReference type="SUPFAM" id="SSF52540">
    <property type="entry name" value="P-loop containing nucleoside triphosphate hydrolases"/>
    <property type="match status" value="2"/>
</dbReference>
<dbReference type="SUPFAM" id="SSF81767">
    <property type="entry name" value="Pre-protein crosslinking domain of SecA"/>
    <property type="match status" value="1"/>
</dbReference>
<dbReference type="PROSITE" id="PS51196">
    <property type="entry name" value="SECA_MOTOR_DEAD"/>
    <property type="match status" value="1"/>
</dbReference>
<protein>
    <recommendedName>
        <fullName evidence="1">Protein translocase subunit SecA</fullName>
        <ecNumber evidence="1">7.4.2.8</ecNumber>
    </recommendedName>
</protein>
<name>SECA_PSEPF</name>
<evidence type="ECO:0000255" key="1">
    <source>
        <dbReference type="HAMAP-Rule" id="MF_01382"/>
    </source>
</evidence>
<evidence type="ECO:0000305" key="2"/>
<comment type="function">
    <text evidence="1">Part of the Sec protein translocase complex. Interacts with the SecYEG preprotein conducting channel. Has a central role in coupling the hydrolysis of ATP to the transfer of proteins into and across the cell membrane, serving both as a receptor for the preprotein-SecB complex and as an ATP-driven molecular motor driving the stepwise translocation of polypeptide chains across the membrane.</text>
</comment>
<comment type="catalytic activity">
    <reaction evidence="1">
        <text>ATP + H2O + cellular proteinSide 1 = ADP + phosphate + cellular proteinSide 2.</text>
        <dbReference type="EC" id="7.4.2.8"/>
    </reaction>
</comment>
<comment type="cofactor">
    <cofactor evidence="1">
        <name>Zn(2+)</name>
        <dbReference type="ChEBI" id="CHEBI:29105"/>
    </cofactor>
    <text evidence="1">May bind 1 zinc ion per subunit.</text>
</comment>
<comment type="subunit">
    <text evidence="1">Monomer and homodimer. Part of the essential Sec protein translocation apparatus which comprises SecA, SecYEG and auxiliary proteins SecDF-YajC and YidC.</text>
</comment>
<comment type="subcellular location">
    <subcellularLocation>
        <location evidence="1">Cell inner membrane</location>
        <topology evidence="1">Peripheral membrane protein</topology>
        <orientation evidence="1">Cytoplasmic side</orientation>
    </subcellularLocation>
    <subcellularLocation>
        <location evidence="1">Cytoplasm</location>
    </subcellularLocation>
    <text evidence="1">Distribution is 50-50.</text>
</comment>
<comment type="similarity">
    <text evidence="1">Belongs to the SecA family.</text>
</comment>
<comment type="sequence caution" evidence="2">
    <conflict type="erroneous initiation">
        <sequence resource="EMBL-CDS" id="ABA76165"/>
    </conflict>
    <text>Extended N-terminus.</text>
</comment>
<reference key="1">
    <citation type="journal article" date="2009" name="Genome Biol.">
        <title>Genomic and genetic analyses of diversity and plant interactions of Pseudomonas fluorescens.</title>
        <authorList>
            <person name="Silby M.W."/>
            <person name="Cerdeno-Tarraga A.M."/>
            <person name="Vernikos G.S."/>
            <person name="Giddens S.R."/>
            <person name="Jackson R.W."/>
            <person name="Preston G.M."/>
            <person name="Zhang X.-X."/>
            <person name="Moon C.D."/>
            <person name="Gehrig S.M."/>
            <person name="Godfrey S.A.C."/>
            <person name="Knight C.G."/>
            <person name="Malone J.G."/>
            <person name="Robinson Z."/>
            <person name="Spiers A.J."/>
            <person name="Harris S."/>
            <person name="Challis G.L."/>
            <person name="Yaxley A.M."/>
            <person name="Harris D."/>
            <person name="Seeger K."/>
            <person name="Murphy L."/>
            <person name="Rutter S."/>
            <person name="Squares R."/>
            <person name="Quail M.A."/>
            <person name="Saunders E."/>
            <person name="Mavromatis K."/>
            <person name="Brettin T.S."/>
            <person name="Bentley S.D."/>
            <person name="Hothersall J."/>
            <person name="Stephens E."/>
            <person name="Thomas C.M."/>
            <person name="Parkhill J."/>
            <person name="Levy S.B."/>
            <person name="Rainey P.B."/>
            <person name="Thomson N.R."/>
        </authorList>
    </citation>
    <scope>NUCLEOTIDE SEQUENCE [LARGE SCALE GENOMIC DNA]</scope>
    <source>
        <strain>Pf0-1</strain>
    </source>
</reference>
<organism>
    <name type="scientific">Pseudomonas fluorescens (strain Pf0-1)</name>
    <dbReference type="NCBI Taxonomy" id="205922"/>
    <lineage>
        <taxon>Bacteria</taxon>
        <taxon>Pseudomonadati</taxon>
        <taxon>Pseudomonadota</taxon>
        <taxon>Gammaproteobacteria</taxon>
        <taxon>Pseudomonadales</taxon>
        <taxon>Pseudomonadaceae</taxon>
        <taxon>Pseudomonas</taxon>
    </lineage>
</organism>
<accession>Q3K7T9</accession>
<gene>
    <name evidence="1" type="primary">secA</name>
    <name type="ordered locus">Pfl01_4428</name>
</gene>
<keyword id="KW-0067">ATP-binding</keyword>
<keyword id="KW-0997">Cell inner membrane</keyword>
<keyword id="KW-1003">Cell membrane</keyword>
<keyword id="KW-0963">Cytoplasm</keyword>
<keyword id="KW-0472">Membrane</keyword>
<keyword id="KW-0479">Metal-binding</keyword>
<keyword id="KW-0547">Nucleotide-binding</keyword>
<keyword id="KW-0653">Protein transport</keyword>
<keyword id="KW-1278">Translocase</keyword>
<keyword id="KW-0811">Translocation</keyword>
<keyword id="KW-0813">Transport</keyword>
<keyword id="KW-0862">Zinc</keyword>
<proteinExistence type="inferred from homology"/>
<sequence length="912" mass="102930">MFAPLLKKLFGSKNEREVKRMLKTVQLVNAFEEKMVALSDDQLRAKTAEFKDRIAKGETLDQLLPEAFAVAREAGKRVMGMRHFDVQLIGGMTLHEGKIAEMRTGEGKTLVGTLGVYLNALSGKGVHVVTVNDYLARRDANWMRPLYEFLGLSVGIVTPFQPPEEKRAAYAADITYGTNNEFGFDYLRDNMAFSMEEKFQRELNFAVIDEVDSILIDEARTPLIISGQAEDSSRLYIEINKLIPKLKLHVEEVEGEVTQEGHYTVDEKTRQVELNEAGHQFIEDQLTSIGLLAEGESLYSAHNLSLLTHVYAGLRAHKLFHRNVEYIVQDGQVVLVDEHTGRTMPGRRLSEGLHQAIEAKENLNIQAESQTLASTTFQNYFRLYDKLSGMTGTADTEAFEFHQIYGLQVVVIPTNKPLARKDYNDLVFLTAEEKYAAIVNDIKESMAAGRPVLVGTATIETSEHMSALLEKEGIEHKVLNAKFHEKEAEIIAQAGRPGALTIATNMAGRGTDILLGGNWEVEVASLENPTPEQIAQIKADWQKRHQQVLESGGLQVIASERHESRRIDNQLRGRAGRQGDAGSSRFYLSLEDSLMRIFASDRVKNFMKALGMQSGEAIEHRMVTNAIEKAQRKVEGRNFDIRKQLLEFDDVNNEQRKVIYHMRNTLLAADNIGETIADFRQDVLNATVSAHIPPQSLPEQWDVAGLEASIASDFGVKLPIQQWLDEDDHLYEETLREKLMNELIAAYNEKEDQAGAEALRSFEKQIVLRVLDDLWKDHLSTMDHLRHGIHLRGYAQKNPKQEYKRESFTLFSELLDSIKRDSIRVLSHVQVRREDPAEEEQRLRQEAEALAARMQFEHAEAPGLEAQPELVGEEVDVALAAAPVRNEQKLGRNELCYCGSGKKFKHCHGQIQ</sequence>